<sequence>MAVCGRVRGMFRLSAALPLLLLAAAGAQNGHGQGQGPGTNFGPFPGQGGGGSPAGQQPPQQPQLSQQQQQPPPQQQQQQQQQSLFAAGGLPARRGGAGPGGTGGGWKLAEEESCREDVTRVCPKHTWSNNLAVLECLQDVREPENEISSDCNHLLWNYKLNLTTDPKFESVAREVCKSTISEIKECAEEPVGKGYMVSCLVDHRGNITEYQCHQYITKMTAIIFSDYRLICGFMDDCKNDINLLKCGSIRLGEKDAHSQGEVVSCLEKGLVKEAEEKEPKIQVSELCKKAILRVAELSSDDFHLDRHLYFACRDDRERFCENTQAGEGRVYKCLFNHKFEESMSEKCREALTTRQKLIAQDYKVSYSLAKSCKSDLKKYRCNVENLPRSREARLSYLLMCLESAVHRGRQVSSECQGEMLDYRRMLMEDFSLSPEIILSCRGEIEHHCSGLHRKGRTLHCLMKVVRGEKGNLGMNCQQALQTLIQETDPGADYRIDRALNEACESVIQTACKHIRSGDPMILSCLMEHLYTEKMVEDCEHRLLELQYFISRDWKLDPVLYRKCQGDASRLCHTHGWNETSELMPPGAVFSCLYRHAYRTEEQGRRLSRECRAEVQRILHQRAMDVKLDPALQDKCLIDLGKWCSEKTETGQELECLQDHLDDLAVECRDIVGNLTELESEDIQIEALLMRACEPIIQNFCHDVADNQIDSGDLMECLIQNKHQKDMNEKCAIGVTHFQLVQMKDFRFSYKFKMACKEDVLKLCPNIKKKVDVVICLSTTVRNDTLQEAKEHRVSLKCRKQLRVEELEMTEDIRLEPDLYEACKSDIKNYCSTVQYGNAQIIECLKENKKQLSTRCHQKVFKLQETEMMDPELDYTLMRVCKQMIKRFCPEADSKTMLQCLKQNKNSELMDPKCKQMITKRQITQNTDYRLNPVLRKACKADIPKFCHGILTKAKDDSELEGQVISCLKLRYADQRLSSDCEDQIRIIIQESALDYRLDPQLQLHCSDEIANLCAEEAAAQEQTGQVEECLKVNLLKIKTELCKKEVLNMLKESKADIFVDPVLHTACALDIKHHCAAITPGRGRQMSCLMEALEDKRVRLQPECKKRLNDRIEMWSYAAKVAPADGFSDLAMQVMTSPSKNYILSVISGSICILFLIGLMCGRITKRVTRELKDR</sequence>
<gene>
    <name type="primary">Glg1</name>
    <name type="synonym">Esl1</name>
    <name type="synonym">Mg160</name>
    <name type="synonym">Selel</name>
</gene>
<protein>
    <recommendedName>
        <fullName>Golgi apparatus protein 1</fullName>
    </recommendedName>
    <alternativeName>
        <fullName evidence="8">E-selectin ligand 1</fullName>
        <shortName evidence="8">ESL-1</shortName>
        <shortName>Selel</shortName>
    </alternativeName>
    <alternativeName>
        <fullName>Golgi sialoglycoprotein MG-160</fullName>
    </alternativeName>
</protein>
<dbReference type="EMBL" id="X84037">
    <property type="protein sequence ID" value="CAA58855.1"/>
    <property type="molecule type" value="mRNA"/>
</dbReference>
<dbReference type="EMBL" id="BC021306">
    <property type="protein sequence ID" value="AAH21306.1"/>
    <property type="molecule type" value="mRNA"/>
</dbReference>
<dbReference type="EMBL" id="Y12462">
    <property type="protein sequence ID" value="CAA73066.1"/>
    <property type="molecule type" value="Genomic_DNA"/>
</dbReference>
<dbReference type="CCDS" id="CCDS22671.1"/>
<dbReference type="PIR" id="S52417">
    <property type="entry name" value="S52417"/>
</dbReference>
<dbReference type="RefSeq" id="NP_033175.1">
    <property type="nucleotide sequence ID" value="NM_009149.3"/>
</dbReference>
<dbReference type="SMR" id="Q61543"/>
<dbReference type="BioGRID" id="203155">
    <property type="interactions" value="20"/>
</dbReference>
<dbReference type="DIP" id="DIP-59329N"/>
<dbReference type="FunCoup" id="Q61543">
    <property type="interactions" value="3960"/>
</dbReference>
<dbReference type="IntAct" id="Q61543">
    <property type="interactions" value="1"/>
</dbReference>
<dbReference type="STRING" id="10090.ENSMUSP00000131355"/>
<dbReference type="GlyConnect" id="2358">
    <property type="glycosylation" value="1 N-Linked glycan (1 site)"/>
</dbReference>
<dbReference type="GlyCosmos" id="Q61543">
    <property type="glycosylation" value="5 sites, 1 glycan"/>
</dbReference>
<dbReference type="GlyGen" id="Q61543">
    <property type="glycosylation" value="7 sites, 5 N-linked glycans (4 sites), 1 O-linked glycan (1 site)"/>
</dbReference>
<dbReference type="iPTMnet" id="Q61543"/>
<dbReference type="PhosphoSitePlus" id="Q61543"/>
<dbReference type="SwissPalm" id="Q61543"/>
<dbReference type="jPOST" id="Q61543"/>
<dbReference type="PaxDb" id="10090-ENSMUSP00000131355"/>
<dbReference type="ProteomicsDB" id="271473"/>
<dbReference type="Pumba" id="Q61543"/>
<dbReference type="Antibodypedia" id="2273">
    <property type="antibodies" value="333 antibodies from 27 providers"/>
</dbReference>
<dbReference type="DNASU" id="20340"/>
<dbReference type="Ensembl" id="ENSMUST00000169020.8">
    <property type="protein sequence ID" value="ENSMUSP00000131355.2"/>
    <property type="gene ID" value="ENSMUSG00000003316.15"/>
</dbReference>
<dbReference type="GeneID" id="20340"/>
<dbReference type="KEGG" id="mmu:20340"/>
<dbReference type="UCSC" id="uc009nma.1">
    <property type="organism name" value="mouse"/>
</dbReference>
<dbReference type="AGR" id="MGI:104967"/>
<dbReference type="CTD" id="2734"/>
<dbReference type="MGI" id="MGI:104967">
    <property type="gene designation" value="Glg1"/>
</dbReference>
<dbReference type="VEuPathDB" id="HostDB:ENSMUSG00000003316"/>
<dbReference type="eggNOG" id="KOG3648">
    <property type="taxonomic scope" value="Eukaryota"/>
</dbReference>
<dbReference type="GeneTree" id="ENSGT00390000011262"/>
<dbReference type="InParanoid" id="Q61543"/>
<dbReference type="OMA" id="MMECLIE"/>
<dbReference type="OrthoDB" id="2015434at2759"/>
<dbReference type="PhylomeDB" id="Q61543"/>
<dbReference type="TreeFam" id="TF106112"/>
<dbReference type="Reactome" id="R-MMU-202733">
    <property type="pathway name" value="Cell surface interactions at the vascular wall"/>
</dbReference>
<dbReference type="BioGRID-ORCS" id="20340">
    <property type="hits" value="1 hit in 78 CRISPR screens"/>
</dbReference>
<dbReference type="CD-CODE" id="CE726F99">
    <property type="entry name" value="Postsynaptic density"/>
</dbReference>
<dbReference type="ChiTaRS" id="Glg1">
    <property type="organism name" value="mouse"/>
</dbReference>
<dbReference type="PRO" id="PR:Q61543"/>
<dbReference type="Proteomes" id="UP000000589">
    <property type="component" value="Chromosome 8"/>
</dbReference>
<dbReference type="RNAct" id="Q61543">
    <property type="molecule type" value="protein"/>
</dbReference>
<dbReference type="Bgee" id="ENSMUSG00000003316">
    <property type="expression patterns" value="Expressed in secondary palatal shelf and 271 other cell types or tissues"/>
</dbReference>
<dbReference type="ExpressionAtlas" id="Q61543">
    <property type="expression patterns" value="baseline and differential"/>
</dbReference>
<dbReference type="GO" id="GO:0031012">
    <property type="term" value="C:extracellular matrix"/>
    <property type="evidence" value="ECO:0000314"/>
    <property type="project" value="MGI"/>
</dbReference>
<dbReference type="GO" id="GO:0005794">
    <property type="term" value="C:Golgi apparatus"/>
    <property type="evidence" value="ECO:0000314"/>
    <property type="project" value="MGI"/>
</dbReference>
<dbReference type="GO" id="GO:0000139">
    <property type="term" value="C:Golgi membrane"/>
    <property type="evidence" value="ECO:0000314"/>
    <property type="project" value="MGI"/>
</dbReference>
<dbReference type="GO" id="GO:0005815">
    <property type="term" value="C:microtubule organizing center"/>
    <property type="evidence" value="ECO:0007669"/>
    <property type="project" value="UniProtKB-SubCell"/>
</dbReference>
<dbReference type="GO" id="GO:0005886">
    <property type="term" value="C:plasma membrane"/>
    <property type="evidence" value="ECO:0007669"/>
    <property type="project" value="UniProtKB-SubCell"/>
</dbReference>
<dbReference type="GO" id="GO:0060349">
    <property type="term" value="P:bone morphogenesis"/>
    <property type="evidence" value="ECO:0000315"/>
    <property type="project" value="MGI"/>
</dbReference>
<dbReference type="GO" id="GO:0010955">
    <property type="term" value="P:negative regulation of protein processing"/>
    <property type="evidence" value="ECO:0000315"/>
    <property type="project" value="MGI"/>
</dbReference>
<dbReference type="GO" id="GO:0030512">
    <property type="term" value="P:negative regulation of transforming growth factor beta receptor signaling pathway"/>
    <property type="evidence" value="ECO:0000315"/>
    <property type="project" value="MGI"/>
</dbReference>
<dbReference type="GO" id="GO:0016485">
    <property type="term" value="P:protein processing"/>
    <property type="evidence" value="ECO:0000315"/>
    <property type="project" value="MGI"/>
</dbReference>
<dbReference type="GO" id="GO:0032330">
    <property type="term" value="P:regulation of chondrocyte differentiation"/>
    <property type="evidence" value="ECO:0000315"/>
    <property type="project" value="MGI"/>
</dbReference>
<dbReference type="GO" id="GO:0007179">
    <property type="term" value="P:transforming growth factor beta receptor signaling pathway"/>
    <property type="evidence" value="ECO:0000315"/>
    <property type="project" value="MGI"/>
</dbReference>
<dbReference type="InterPro" id="IPR001893">
    <property type="entry name" value="Cys-rich_GLG1_repeat"/>
</dbReference>
<dbReference type="InterPro" id="IPR017873">
    <property type="entry name" value="Cys-rich_GLG1_repeat_euk"/>
</dbReference>
<dbReference type="InterPro" id="IPR039728">
    <property type="entry name" value="GLG1"/>
</dbReference>
<dbReference type="PANTHER" id="PTHR11884:SF1">
    <property type="entry name" value="GOLGI APPARATUS PROTEIN 1"/>
    <property type="match status" value="1"/>
</dbReference>
<dbReference type="PANTHER" id="PTHR11884">
    <property type="entry name" value="SELECTIN LIGAND RELATED"/>
    <property type="match status" value="1"/>
</dbReference>
<dbReference type="Pfam" id="PF00839">
    <property type="entry name" value="Cys_rich_FGFR"/>
    <property type="match status" value="15"/>
</dbReference>
<dbReference type="PROSITE" id="PS51289">
    <property type="entry name" value="GLG1_C_RICH"/>
    <property type="match status" value="16"/>
</dbReference>
<keyword id="KW-1003">Cell membrane</keyword>
<keyword id="KW-0963">Cytoplasm</keyword>
<keyword id="KW-0206">Cytoskeleton</keyword>
<keyword id="KW-0903">Direct protein sequencing</keyword>
<keyword id="KW-0325">Glycoprotein</keyword>
<keyword id="KW-0333">Golgi apparatus</keyword>
<keyword id="KW-0472">Membrane</keyword>
<keyword id="KW-0597">Phosphoprotein</keyword>
<keyword id="KW-1185">Reference proteome</keyword>
<keyword id="KW-0677">Repeat</keyword>
<keyword id="KW-0730">Sialic acid</keyword>
<keyword id="KW-0732">Signal</keyword>
<keyword id="KW-0812">Transmembrane</keyword>
<keyword id="KW-1133">Transmembrane helix</keyword>
<reference key="1">
    <citation type="journal article" date="1995" name="Nature">
        <title>The E-selectin-ligand ESL-1 is a variant of a receptor for fibroblast growth factor.</title>
        <authorList>
            <person name="Steegmaier M."/>
            <person name="Levinovitz A."/>
            <person name="Isenmann S."/>
            <person name="Borges E."/>
            <person name="Lenter M."/>
            <person name="Kocher H.P."/>
            <person name="Kleuser B."/>
            <person name="Vestweber D."/>
        </authorList>
    </citation>
    <scope>NUCLEOTIDE SEQUENCE [MRNA]</scope>
    <scope>FUNCTION</scope>
    <scope>GLYCOSYLATION</scope>
    <scope>PROTEIN SEQUENCE OF 255-266; 357-363; 636-641 AND 744-750</scope>
    <source>
        <tissue>Neutrophil</tissue>
    </source>
</reference>
<reference key="2">
    <citation type="journal article" date="2004" name="Genome Res.">
        <title>The status, quality, and expansion of the NIH full-length cDNA project: the Mammalian Gene Collection (MGC).</title>
        <authorList>
            <consortium name="The MGC Project Team"/>
        </authorList>
    </citation>
    <scope>NUCLEOTIDE SEQUENCE [LARGE SCALE MRNA]</scope>
    <source>
        <strain>FVB/N</strain>
        <tissue>Kidney</tissue>
    </source>
</reference>
<reference key="3">
    <citation type="journal article" date="1999" name="Mamm. Genome">
        <title>Structure of the murine E-selectin ligand 1 (ESL-1) gene and assignment to chromosome 8.</title>
        <authorList>
            <person name="Willmroth F."/>
            <person name="Beaudet A.L."/>
        </authorList>
    </citation>
    <scope>NUCLEOTIDE SEQUENCE OF 1-138</scope>
    <source>
        <strain>129/Sv</strain>
        <tissue>Embryonic stem cell</tissue>
    </source>
</reference>
<reference key="4">
    <citation type="journal article" date="1997" name="J. Cell Sci.">
        <title>The E-selectin-ligand ESL-1 is located in the Golgi as well as on microvilli on the cell surface.</title>
        <authorList>
            <person name="Steegmaier M."/>
            <person name="Borges E."/>
            <person name="Berger J."/>
            <person name="Schwarz H."/>
            <person name="Vestweber D."/>
        </authorList>
    </citation>
    <scope>SUBCELLULAR LOCATION</scope>
</reference>
<reference key="5">
    <citation type="journal article" date="2009" name="Mol. Cell. Proteomics">
        <title>The mouse C2C12 myoblast cell surface N-linked glycoproteome: identification, glycosite occupancy, and membrane orientation.</title>
        <authorList>
            <person name="Gundry R.L."/>
            <person name="Raginski K."/>
            <person name="Tarasova Y."/>
            <person name="Tchernyshyov I."/>
            <person name="Bausch-Fluck D."/>
            <person name="Elliott S.T."/>
            <person name="Boheler K.R."/>
            <person name="Van Eyk J.E."/>
            <person name="Wollscheid B."/>
        </authorList>
    </citation>
    <scope>GLYCOSYLATION [LARGE SCALE ANALYSIS] AT ASN-161 AND ASN-673</scope>
    <source>
        <tissue>Myoblast</tissue>
    </source>
</reference>
<reference key="6">
    <citation type="journal article" date="2009" name="Nat. Biotechnol.">
        <title>Mass-spectrometric identification and relative quantification of N-linked cell surface glycoproteins.</title>
        <authorList>
            <person name="Wollscheid B."/>
            <person name="Bausch-Fluck D."/>
            <person name="Henderson C."/>
            <person name="O'Brien R."/>
            <person name="Bibel M."/>
            <person name="Schiess R."/>
            <person name="Aebersold R."/>
            <person name="Watts J.D."/>
        </authorList>
    </citation>
    <scope>GLYCOSYLATION [LARGE SCALE ANALYSIS] AT ASN-206</scope>
</reference>
<reference key="7">
    <citation type="journal article" date="2010" name="Cell">
        <title>A tissue-specific atlas of mouse protein phosphorylation and expression.</title>
        <authorList>
            <person name="Huttlin E.L."/>
            <person name="Jedrychowski M.P."/>
            <person name="Elias J.E."/>
            <person name="Goswami T."/>
            <person name="Rad R."/>
            <person name="Beausoleil S.A."/>
            <person name="Villen J."/>
            <person name="Haas W."/>
            <person name="Sowa M.E."/>
            <person name="Gygi S.P."/>
        </authorList>
    </citation>
    <scope>PHOSPHORYLATION [LARGE SCALE ANALYSIS] AT SER-957</scope>
    <scope>IDENTIFICATION BY MASS SPECTROMETRY [LARGE SCALE ANALYSIS]</scope>
    <source>
        <tissue>Brain</tissue>
        <tissue>Brown adipose tissue</tissue>
        <tissue>Heart</tissue>
        <tissue>Kidney</tissue>
        <tissue>Liver</tissue>
        <tissue>Lung</tissue>
        <tissue>Pancreas</tissue>
        <tissue>Spleen</tissue>
        <tissue>Testis</tissue>
    </source>
</reference>
<name>GSLG1_MOUSE</name>
<evidence type="ECO:0000250" key="1">
    <source>
        <dbReference type="UniProtKB" id="Q62638"/>
    </source>
</evidence>
<evidence type="ECO:0000255" key="2"/>
<evidence type="ECO:0000256" key="3">
    <source>
        <dbReference type="SAM" id="MobiDB-lite"/>
    </source>
</evidence>
<evidence type="ECO:0000269" key="4">
    <source>
    </source>
</evidence>
<evidence type="ECO:0000269" key="5">
    <source>
    </source>
</evidence>
<evidence type="ECO:0000269" key="6">
    <source>
    </source>
</evidence>
<evidence type="ECO:0000269" key="7">
    <source>
    </source>
</evidence>
<evidence type="ECO:0000303" key="8">
    <source>
    </source>
</evidence>
<evidence type="ECO:0007744" key="9">
    <source>
    </source>
</evidence>
<feature type="signal peptide" evidence="2">
    <location>
        <begin position="1"/>
        <end position="27"/>
    </location>
</feature>
<feature type="chain" id="PRO_0000011121" description="Golgi apparatus protein 1">
    <location>
        <begin position="28"/>
        <end position="1175"/>
    </location>
</feature>
<feature type="topological domain" description="Extracellular" evidence="2">
    <location>
        <begin position="28"/>
        <end position="1141"/>
    </location>
</feature>
<feature type="transmembrane region" description="Helical" evidence="2">
    <location>
        <begin position="1142"/>
        <end position="1162"/>
    </location>
</feature>
<feature type="topological domain" description="Cytoplasmic" evidence="2">
    <location>
        <begin position="1163"/>
        <end position="1175"/>
    </location>
</feature>
<feature type="repeat" description="Cys-rich GLG1 1">
    <location>
        <begin position="112"/>
        <end position="145"/>
    </location>
</feature>
<feature type="repeat" description="Cys-rich GLG1 2">
    <location>
        <begin position="146"/>
        <end position="208"/>
    </location>
</feature>
<feature type="repeat" description="Cys-rich GLG1 3">
    <location>
        <begin position="211"/>
        <end position="274"/>
    </location>
</feature>
<feature type="repeat" description="Cys-rich GLG1 4">
    <location>
        <begin position="282"/>
        <end position="342"/>
    </location>
</feature>
<feature type="repeat" description="Cys-rich GLG1 5">
    <location>
        <begin position="343"/>
        <end position="409"/>
    </location>
</feature>
<feature type="repeat" description="Cys-rich GLG1 6">
    <location>
        <begin position="410"/>
        <end position="469"/>
    </location>
</feature>
<feature type="repeat" description="Cys-rich GLG1 7">
    <location>
        <begin position="471"/>
        <end position="533"/>
    </location>
</feature>
<feature type="repeat" description="Cys-rich GLG1 8">
    <location>
        <begin position="534"/>
        <end position="600"/>
    </location>
</feature>
<feature type="repeat" description="Cys-rich GLG1 9">
    <location>
        <begin position="605"/>
        <end position="664"/>
    </location>
</feature>
<feature type="repeat" description="Cys-rich GLG1 10">
    <location>
        <begin position="666"/>
        <end position="724"/>
    </location>
</feature>
<feature type="repeat" description="Cys-rich GLG1 11">
    <location>
        <begin position="725"/>
        <end position="784"/>
    </location>
</feature>
<feature type="repeat" description="Cys-rich GLG1 12">
    <location>
        <begin position="792"/>
        <end position="852"/>
    </location>
</feature>
<feature type="repeat" description="Cys-rich GLG1 13">
    <location>
        <begin position="854"/>
        <end position="907"/>
    </location>
</feature>
<feature type="repeat" description="Cys-rich GLG1 14">
    <location>
        <begin position="908"/>
        <end position="975"/>
    </location>
</feature>
<feature type="repeat" description="Cys-rich GLG1 15">
    <location>
        <begin position="976"/>
        <end position="1031"/>
    </location>
</feature>
<feature type="repeat" description="Cys-rich GLG1 16">
    <location>
        <begin position="1037"/>
        <end position="1097"/>
    </location>
</feature>
<feature type="region of interest" description="Disordered" evidence="3">
    <location>
        <begin position="30"/>
        <end position="83"/>
    </location>
</feature>
<feature type="region of interest" description="Disordered" evidence="3">
    <location>
        <begin position="89"/>
        <end position="108"/>
    </location>
</feature>
<feature type="compositionally biased region" description="Gly residues" evidence="3">
    <location>
        <begin position="30"/>
        <end position="53"/>
    </location>
</feature>
<feature type="compositionally biased region" description="Low complexity" evidence="3">
    <location>
        <begin position="54"/>
        <end position="83"/>
    </location>
</feature>
<feature type="compositionally biased region" description="Gly residues" evidence="3">
    <location>
        <begin position="95"/>
        <end position="106"/>
    </location>
</feature>
<feature type="modified residue" description="Phosphoserine" evidence="9">
    <location>
        <position position="957"/>
    </location>
</feature>
<feature type="glycosylation site" description="N-linked (GlcNAc...) asparagine" evidence="5">
    <location>
        <position position="161"/>
    </location>
</feature>
<feature type="glycosylation site" description="N-linked (GlcNAc...) asparagine" evidence="4">
    <location>
        <position position="206"/>
    </location>
</feature>
<feature type="glycosylation site" description="N-linked (GlcNAc...) asparagine" evidence="2">
    <location>
        <position position="577"/>
    </location>
</feature>
<feature type="glycosylation site" description="N-linked (GlcNAc...) asparagine" evidence="5">
    <location>
        <position position="673"/>
    </location>
</feature>
<feature type="glycosylation site" description="N-linked (GlcNAc...) asparagine" evidence="2">
    <location>
        <position position="782"/>
    </location>
</feature>
<proteinExistence type="evidence at protein level"/>
<organism>
    <name type="scientific">Mus musculus</name>
    <name type="common">Mouse</name>
    <dbReference type="NCBI Taxonomy" id="10090"/>
    <lineage>
        <taxon>Eukaryota</taxon>
        <taxon>Metazoa</taxon>
        <taxon>Chordata</taxon>
        <taxon>Craniata</taxon>
        <taxon>Vertebrata</taxon>
        <taxon>Euteleostomi</taxon>
        <taxon>Mammalia</taxon>
        <taxon>Eutheria</taxon>
        <taxon>Euarchontoglires</taxon>
        <taxon>Glires</taxon>
        <taxon>Rodentia</taxon>
        <taxon>Myomorpha</taxon>
        <taxon>Muroidea</taxon>
        <taxon>Muridae</taxon>
        <taxon>Murinae</taxon>
        <taxon>Mus</taxon>
        <taxon>Mus</taxon>
    </lineage>
</organism>
<accession>Q61543</accession>
<accession>Q9QZ40</accession>
<comment type="function">
    <text evidence="6">Binds fibroblast growth factor and E-selectin (cell-adhesion lectin on endothelial cells mediating the binding of neutrophils).</text>
</comment>
<comment type="subcellular location">
    <subcellularLocation>
        <location evidence="7">Cell membrane</location>
        <topology evidence="2">Single-pass type I membrane protein</topology>
    </subcellularLocation>
    <subcellularLocation>
        <location evidence="7">Golgi apparatus membrane</location>
        <topology evidence="2">Single-pass type I membrane protein</topology>
    </subcellularLocation>
    <subcellularLocation>
        <location evidence="1">Golgi outpost</location>
    </subcellularLocation>
    <subcellularLocation>
        <location evidence="1">Cytoplasm</location>
        <location evidence="1">Cytoskeleton</location>
        <location evidence="1">Microtubule organizing center</location>
    </subcellularLocation>
    <text evidence="1 7">Golgi and microvilli on the cell surface (PubMed:9099943). Localizes to the postsynaptic Golgi apparatus region, also named Golgi outpost, which shapes dendrite morphology by functioning as sites of acentrosomal microtubule nucleation (By similarity).</text>
</comment>
<comment type="tissue specificity">
    <text>Widely expressed; found in myeloid cells, fibroblasts, colon carcinoma, endothelioma, teratocarcinoma, lymphoma, myeloma.</text>
</comment>
<comment type="PTM">
    <text evidence="6">Fucosylation is essential for binding to E-selectin.</text>
</comment>
<comment type="PTM">
    <text evidence="1">Contains sialic acid residues.</text>
</comment>